<sequence length="253" mass="26425">MATGRTHRPATRSRGIPEATVARLPLYLRALTALSERSVPTVSSEELATAAGVNSAKLRKDFSYLGSYGTRGVGYDVEYLVYQISRELGLTQDWPVAIVGIGNLGAALANYGGFASRGFRVAALIDADPAMAGTPVAGIAVQHTDDLDRIISDNGVSIGVITTPPGAAQQVCDRLVAAGVTSILNFAPTVLSVPEGVDVRKVDLSIELQILAFHEQRKAGEDSAAEDEGAPPMRATPASRKGPDGDMPAVMPA</sequence>
<gene>
    <name evidence="1" type="primary">rex</name>
    <name type="ordered locus">SGR_4154</name>
</gene>
<name>REX_STRGG</name>
<reference key="1">
    <citation type="journal article" date="2008" name="J. Bacteriol.">
        <title>Genome sequence of the streptomycin-producing microorganism Streptomyces griseus IFO 13350.</title>
        <authorList>
            <person name="Ohnishi Y."/>
            <person name="Ishikawa J."/>
            <person name="Hara H."/>
            <person name="Suzuki H."/>
            <person name="Ikenoya M."/>
            <person name="Ikeda H."/>
            <person name="Yamashita A."/>
            <person name="Hattori M."/>
            <person name="Horinouchi S."/>
        </authorList>
    </citation>
    <scope>NUCLEOTIDE SEQUENCE [LARGE SCALE GENOMIC DNA]</scope>
    <source>
        <strain>JCM 4626 / CBS 651.72 / NBRC 13350 / KCC S-0626 / ISP 5235</strain>
    </source>
</reference>
<organism>
    <name type="scientific">Streptomyces griseus subsp. griseus (strain JCM 4626 / CBS 651.72 / NBRC 13350 / KCC S-0626 / ISP 5235)</name>
    <dbReference type="NCBI Taxonomy" id="455632"/>
    <lineage>
        <taxon>Bacteria</taxon>
        <taxon>Bacillati</taxon>
        <taxon>Actinomycetota</taxon>
        <taxon>Actinomycetes</taxon>
        <taxon>Kitasatosporales</taxon>
        <taxon>Streptomycetaceae</taxon>
        <taxon>Streptomyces</taxon>
    </lineage>
</organism>
<dbReference type="EMBL" id="AP009493">
    <property type="protein sequence ID" value="BAG20983.1"/>
    <property type="molecule type" value="Genomic_DNA"/>
</dbReference>
<dbReference type="RefSeq" id="WP_003968336.1">
    <property type="nucleotide sequence ID" value="NC_010572.1"/>
</dbReference>
<dbReference type="SMR" id="B1VT93"/>
<dbReference type="KEGG" id="sgr:SGR_4154"/>
<dbReference type="eggNOG" id="COG2344">
    <property type="taxonomic scope" value="Bacteria"/>
</dbReference>
<dbReference type="HOGENOM" id="CLU_061534_0_1_11"/>
<dbReference type="Proteomes" id="UP000001685">
    <property type="component" value="Chromosome"/>
</dbReference>
<dbReference type="GO" id="GO:0005737">
    <property type="term" value="C:cytoplasm"/>
    <property type="evidence" value="ECO:0007669"/>
    <property type="project" value="UniProtKB-SubCell"/>
</dbReference>
<dbReference type="GO" id="GO:0003677">
    <property type="term" value="F:DNA binding"/>
    <property type="evidence" value="ECO:0007669"/>
    <property type="project" value="UniProtKB-UniRule"/>
</dbReference>
<dbReference type="GO" id="GO:0003700">
    <property type="term" value="F:DNA-binding transcription factor activity"/>
    <property type="evidence" value="ECO:0007669"/>
    <property type="project" value="UniProtKB-UniRule"/>
</dbReference>
<dbReference type="GO" id="GO:0045892">
    <property type="term" value="P:negative regulation of DNA-templated transcription"/>
    <property type="evidence" value="ECO:0007669"/>
    <property type="project" value="InterPro"/>
</dbReference>
<dbReference type="GO" id="GO:0051775">
    <property type="term" value="P:response to redox state"/>
    <property type="evidence" value="ECO:0007669"/>
    <property type="project" value="InterPro"/>
</dbReference>
<dbReference type="FunFam" id="1.10.10.10:FF:000124">
    <property type="entry name" value="Redox-sensing transcriptional repressor Rex"/>
    <property type="match status" value="1"/>
</dbReference>
<dbReference type="Gene3D" id="3.40.50.720">
    <property type="entry name" value="NAD(P)-binding Rossmann-like Domain"/>
    <property type="match status" value="1"/>
</dbReference>
<dbReference type="Gene3D" id="1.10.10.10">
    <property type="entry name" value="Winged helix-like DNA-binding domain superfamily/Winged helix DNA-binding domain"/>
    <property type="match status" value="1"/>
</dbReference>
<dbReference type="HAMAP" id="MF_01131">
    <property type="entry name" value="Rex"/>
    <property type="match status" value="1"/>
</dbReference>
<dbReference type="InterPro" id="IPR003781">
    <property type="entry name" value="CoA-bd"/>
</dbReference>
<dbReference type="InterPro" id="IPR036291">
    <property type="entry name" value="NAD(P)-bd_dom_sf"/>
</dbReference>
<dbReference type="InterPro" id="IPR009718">
    <property type="entry name" value="Rex_DNA-bd_C_dom"/>
</dbReference>
<dbReference type="InterPro" id="IPR022876">
    <property type="entry name" value="Tscrpt_rep_Rex"/>
</dbReference>
<dbReference type="InterPro" id="IPR036388">
    <property type="entry name" value="WH-like_DNA-bd_sf"/>
</dbReference>
<dbReference type="InterPro" id="IPR036390">
    <property type="entry name" value="WH_DNA-bd_sf"/>
</dbReference>
<dbReference type="NCBIfam" id="NF003989">
    <property type="entry name" value="PRK05472.1-3"/>
    <property type="match status" value="1"/>
</dbReference>
<dbReference type="NCBIfam" id="NF003992">
    <property type="entry name" value="PRK05472.2-1"/>
    <property type="match status" value="1"/>
</dbReference>
<dbReference type="NCBIfam" id="NF003993">
    <property type="entry name" value="PRK05472.2-2"/>
    <property type="match status" value="1"/>
</dbReference>
<dbReference type="NCBIfam" id="NF003994">
    <property type="entry name" value="PRK05472.2-3"/>
    <property type="match status" value="1"/>
</dbReference>
<dbReference type="NCBIfam" id="NF003995">
    <property type="entry name" value="PRK05472.2-4"/>
    <property type="match status" value="1"/>
</dbReference>
<dbReference type="NCBIfam" id="NF003996">
    <property type="entry name" value="PRK05472.2-5"/>
    <property type="match status" value="1"/>
</dbReference>
<dbReference type="PANTHER" id="PTHR35786">
    <property type="entry name" value="REDOX-SENSING TRANSCRIPTIONAL REPRESSOR REX"/>
    <property type="match status" value="1"/>
</dbReference>
<dbReference type="PANTHER" id="PTHR35786:SF1">
    <property type="entry name" value="REDOX-SENSING TRANSCRIPTIONAL REPRESSOR REX 1"/>
    <property type="match status" value="1"/>
</dbReference>
<dbReference type="Pfam" id="PF02629">
    <property type="entry name" value="CoA_binding"/>
    <property type="match status" value="1"/>
</dbReference>
<dbReference type="Pfam" id="PF06971">
    <property type="entry name" value="Put_DNA-bind_N"/>
    <property type="match status" value="1"/>
</dbReference>
<dbReference type="SMART" id="SM00881">
    <property type="entry name" value="CoA_binding"/>
    <property type="match status" value="1"/>
</dbReference>
<dbReference type="SUPFAM" id="SSF51735">
    <property type="entry name" value="NAD(P)-binding Rossmann-fold domains"/>
    <property type="match status" value="1"/>
</dbReference>
<dbReference type="SUPFAM" id="SSF46785">
    <property type="entry name" value="Winged helix' DNA-binding domain"/>
    <property type="match status" value="1"/>
</dbReference>
<comment type="function">
    <text evidence="1">Modulates transcription in response to changes in cellular NADH/NAD(+) redox state.</text>
</comment>
<comment type="subunit">
    <text evidence="1">Homodimer.</text>
</comment>
<comment type="subcellular location">
    <subcellularLocation>
        <location evidence="1">Cytoplasm</location>
    </subcellularLocation>
</comment>
<comment type="similarity">
    <text evidence="1">Belongs to the transcriptional regulatory Rex family.</text>
</comment>
<proteinExistence type="inferred from homology"/>
<protein>
    <recommendedName>
        <fullName evidence="1">Redox-sensing transcriptional repressor Rex</fullName>
    </recommendedName>
</protein>
<feature type="chain" id="PRO_1000137332" description="Redox-sensing transcriptional repressor Rex">
    <location>
        <begin position="1"/>
        <end position="253"/>
    </location>
</feature>
<feature type="DNA-binding region" description="H-T-H motif" evidence="1">
    <location>
        <begin position="26"/>
        <end position="65"/>
    </location>
</feature>
<feature type="region of interest" description="Disordered" evidence="2">
    <location>
        <begin position="217"/>
        <end position="253"/>
    </location>
</feature>
<feature type="binding site" evidence="1">
    <location>
        <begin position="100"/>
        <end position="105"/>
    </location>
    <ligand>
        <name>NAD(+)</name>
        <dbReference type="ChEBI" id="CHEBI:57540"/>
    </ligand>
</feature>
<keyword id="KW-0963">Cytoplasm</keyword>
<keyword id="KW-0238">DNA-binding</keyword>
<keyword id="KW-0520">NAD</keyword>
<keyword id="KW-0678">Repressor</keyword>
<keyword id="KW-0804">Transcription</keyword>
<keyword id="KW-0805">Transcription regulation</keyword>
<evidence type="ECO:0000255" key="1">
    <source>
        <dbReference type="HAMAP-Rule" id="MF_01131"/>
    </source>
</evidence>
<evidence type="ECO:0000256" key="2">
    <source>
        <dbReference type="SAM" id="MobiDB-lite"/>
    </source>
</evidence>
<accession>B1VT93</accession>